<dbReference type="EC" id="6.1.1.10"/>
<dbReference type="EMBL" id="AE002160">
    <property type="protein sequence ID" value="AAF39166.1"/>
    <property type="molecule type" value="Genomic_DNA"/>
</dbReference>
<dbReference type="PIR" id="H81718">
    <property type="entry name" value="H81718"/>
</dbReference>
<dbReference type="RefSeq" id="WP_010904306.1">
    <property type="nucleotide sequence ID" value="NC_002620.2"/>
</dbReference>
<dbReference type="SMR" id="Q9PL07"/>
<dbReference type="GeneID" id="1246471"/>
<dbReference type="KEGG" id="cmu:TC_0301"/>
<dbReference type="PATRIC" id="fig|243161.6.peg.328"/>
<dbReference type="eggNOG" id="COG0143">
    <property type="taxonomic scope" value="Bacteria"/>
</dbReference>
<dbReference type="HOGENOM" id="CLU_009710_1_2_0"/>
<dbReference type="Proteomes" id="UP000000800">
    <property type="component" value="Chromosome"/>
</dbReference>
<dbReference type="GO" id="GO:0005829">
    <property type="term" value="C:cytosol"/>
    <property type="evidence" value="ECO:0007669"/>
    <property type="project" value="TreeGrafter"/>
</dbReference>
<dbReference type="GO" id="GO:0005524">
    <property type="term" value="F:ATP binding"/>
    <property type="evidence" value="ECO:0007669"/>
    <property type="project" value="UniProtKB-UniRule"/>
</dbReference>
<dbReference type="GO" id="GO:0046872">
    <property type="term" value="F:metal ion binding"/>
    <property type="evidence" value="ECO:0007669"/>
    <property type="project" value="UniProtKB-KW"/>
</dbReference>
<dbReference type="GO" id="GO:0004825">
    <property type="term" value="F:methionine-tRNA ligase activity"/>
    <property type="evidence" value="ECO:0007669"/>
    <property type="project" value="UniProtKB-UniRule"/>
</dbReference>
<dbReference type="GO" id="GO:0006431">
    <property type="term" value="P:methionyl-tRNA aminoacylation"/>
    <property type="evidence" value="ECO:0007669"/>
    <property type="project" value="UniProtKB-UniRule"/>
</dbReference>
<dbReference type="CDD" id="cd07957">
    <property type="entry name" value="Anticodon_Ia_Met"/>
    <property type="match status" value="1"/>
</dbReference>
<dbReference type="CDD" id="cd00814">
    <property type="entry name" value="MetRS_core"/>
    <property type="match status" value="1"/>
</dbReference>
<dbReference type="FunFam" id="2.20.28.20:FF:000001">
    <property type="entry name" value="Methionine--tRNA ligase"/>
    <property type="match status" value="1"/>
</dbReference>
<dbReference type="Gene3D" id="3.40.50.620">
    <property type="entry name" value="HUPs"/>
    <property type="match status" value="1"/>
</dbReference>
<dbReference type="Gene3D" id="1.10.730.10">
    <property type="entry name" value="Isoleucyl-tRNA Synthetase, Domain 1"/>
    <property type="match status" value="1"/>
</dbReference>
<dbReference type="Gene3D" id="2.20.28.20">
    <property type="entry name" value="Methionyl-tRNA synthetase, Zn-domain"/>
    <property type="match status" value="1"/>
</dbReference>
<dbReference type="HAMAP" id="MF_00098">
    <property type="entry name" value="Met_tRNA_synth_type1"/>
    <property type="match status" value="1"/>
</dbReference>
<dbReference type="InterPro" id="IPR041872">
    <property type="entry name" value="Anticodon_Met"/>
</dbReference>
<dbReference type="InterPro" id="IPR023458">
    <property type="entry name" value="Met-tRNA_ligase_1"/>
</dbReference>
<dbReference type="InterPro" id="IPR014758">
    <property type="entry name" value="Met-tRNA_synth"/>
</dbReference>
<dbReference type="InterPro" id="IPR015413">
    <property type="entry name" value="Methionyl/Leucyl_tRNA_Synth"/>
</dbReference>
<dbReference type="InterPro" id="IPR033911">
    <property type="entry name" value="MetRS_core"/>
</dbReference>
<dbReference type="InterPro" id="IPR029038">
    <property type="entry name" value="MetRS_Zn"/>
</dbReference>
<dbReference type="InterPro" id="IPR014729">
    <property type="entry name" value="Rossmann-like_a/b/a_fold"/>
</dbReference>
<dbReference type="InterPro" id="IPR009080">
    <property type="entry name" value="tRNAsynth_Ia_anticodon-bd"/>
</dbReference>
<dbReference type="NCBIfam" id="TIGR00398">
    <property type="entry name" value="metG"/>
    <property type="match status" value="1"/>
</dbReference>
<dbReference type="PANTHER" id="PTHR45765">
    <property type="entry name" value="METHIONINE--TRNA LIGASE"/>
    <property type="match status" value="1"/>
</dbReference>
<dbReference type="PANTHER" id="PTHR45765:SF1">
    <property type="entry name" value="METHIONINE--TRNA LIGASE, CYTOPLASMIC"/>
    <property type="match status" value="1"/>
</dbReference>
<dbReference type="Pfam" id="PF19303">
    <property type="entry name" value="Anticodon_3"/>
    <property type="match status" value="1"/>
</dbReference>
<dbReference type="Pfam" id="PF09334">
    <property type="entry name" value="tRNA-synt_1g"/>
    <property type="match status" value="1"/>
</dbReference>
<dbReference type="PRINTS" id="PR01041">
    <property type="entry name" value="TRNASYNTHMET"/>
</dbReference>
<dbReference type="SUPFAM" id="SSF47323">
    <property type="entry name" value="Anticodon-binding domain of a subclass of class I aminoacyl-tRNA synthetases"/>
    <property type="match status" value="1"/>
</dbReference>
<dbReference type="SUPFAM" id="SSF57770">
    <property type="entry name" value="Methionyl-tRNA synthetase (MetRS), Zn-domain"/>
    <property type="match status" value="1"/>
</dbReference>
<dbReference type="SUPFAM" id="SSF52374">
    <property type="entry name" value="Nucleotidylyl transferase"/>
    <property type="match status" value="1"/>
</dbReference>
<feature type="chain" id="PRO_0000139120" description="Methionine--tRNA ligase">
    <location>
        <begin position="1"/>
        <end position="550"/>
    </location>
</feature>
<feature type="short sequence motif" description="'HIGH' region">
    <location>
        <begin position="13"/>
        <end position="23"/>
    </location>
</feature>
<feature type="short sequence motif" description="'KMSKS' region">
    <location>
        <begin position="331"/>
        <end position="335"/>
    </location>
</feature>
<feature type="binding site" evidence="1">
    <location>
        <position position="145"/>
    </location>
    <ligand>
        <name>Zn(2+)</name>
        <dbReference type="ChEBI" id="CHEBI:29105"/>
    </ligand>
</feature>
<feature type="binding site" evidence="1">
    <location>
        <position position="148"/>
    </location>
    <ligand>
        <name>Zn(2+)</name>
        <dbReference type="ChEBI" id="CHEBI:29105"/>
    </ligand>
</feature>
<feature type="binding site" evidence="1">
    <location>
        <position position="158"/>
    </location>
    <ligand>
        <name>Zn(2+)</name>
        <dbReference type="ChEBI" id="CHEBI:29105"/>
    </ligand>
</feature>
<feature type="binding site" evidence="1">
    <location>
        <position position="161"/>
    </location>
    <ligand>
        <name>Zn(2+)</name>
        <dbReference type="ChEBI" id="CHEBI:29105"/>
    </ligand>
</feature>
<feature type="binding site" evidence="1">
    <location>
        <position position="334"/>
    </location>
    <ligand>
        <name>ATP</name>
        <dbReference type="ChEBI" id="CHEBI:30616"/>
    </ligand>
</feature>
<evidence type="ECO:0000250" key="1"/>
<evidence type="ECO:0000305" key="2"/>
<proteinExistence type="inferred from homology"/>
<comment type="function">
    <text evidence="1">Is required not only for elongation of protein synthesis but also for the initiation of all mRNA translation through initiator tRNA(fMet) aminoacylation.</text>
</comment>
<comment type="catalytic activity">
    <reaction>
        <text>tRNA(Met) + L-methionine + ATP = L-methionyl-tRNA(Met) + AMP + diphosphate</text>
        <dbReference type="Rhea" id="RHEA:13481"/>
        <dbReference type="Rhea" id="RHEA-COMP:9667"/>
        <dbReference type="Rhea" id="RHEA-COMP:9698"/>
        <dbReference type="ChEBI" id="CHEBI:30616"/>
        <dbReference type="ChEBI" id="CHEBI:33019"/>
        <dbReference type="ChEBI" id="CHEBI:57844"/>
        <dbReference type="ChEBI" id="CHEBI:78442"/>
        <dbReference type="ChEBI" id="CHEBI:78530"/>
        <dbReference type="ChEBI" id="CHEBI:456215"/>
        <dbReference type="EC" id="6.1.1.10"/>
    </reaction>
</comment>
<comment type="cofactor">
    <cofactor evidence="1">
        <name>Zn(2+)</name>
        <dbReference type="ChEBI" id="CHEBI:29105"/>
    </cofactor>
    <text evidence="1">Binds 1 zinc ion per subunit.</text>
</comment>
<comment type="subunit">
    <text evidence="1">Monomer.</text>
</comment>
<comment type="subcellular location">
    <subcellularLocation>
        <location evidence="1">Cytoplasm</location>
    </subcellularLocation>
</comment>
<comment type="similarity">
    <text evidence="2">Belongs to the class-I aminoacyl-tRNA synthetase family. MetG type 1 subfamily.</text>
</comment>
<organism>
    <name type="scientific">Chlamydia muridarum (strain MoPn / Nigg)</name>
    <dbReference type="NCBI Taxonomy" id="243161"/>
    <lineage>
        <taxon>Bacteria</taxon>
        <taxon>Pseudomonadati</taxon>
        <taxon>Chlamydiota</taxon>
        <taxon>Chlamydiia</taxon>
        <taxon>Chlamydiales</taxon>
        <taxon>Chlamydiaceae</taxon>
        <taxon>Chlamydia/Chlamydophila group</taxon>
        <taxon>Chlamydia</taxon>
    </lineage>
</organism>
<reference key="1">
    <citation type="journal article" date="2000" name="Nucleic Acids Res.">
        <title>Genome sequences of Chlamydia trachomatis MoPn and Chlamydia pneumoniae AR39.</title>
        <authorList>
            <person name="Read T.D."/>
            <person name="Brunham R.C."/>
            <person name="Shen C."/>
            <person name="Gill S.R."/>
            <person name="Heidelberg J.F."/>
            <person name="White O."/>
            <person name="Hickey E.K."/>
            <person name="Peterson J.D."/>
            <person name="Utterback T.R."/>
            <person name="Berry K.J."/>
            <person name="Bass S."/>
            <person name="Linher K.D."/>
            <person name="Weidman J.F."/>
            <person name="Khouri H.M."/>
            <person name="Craven B."/>
            <person name="Bowman C."/>
            <person name="Dodson R.J."/>
            <person name="Gwinn M.L."/>
            <person name="Nelson W.C."/>
            <person name="DeBoy R.T."/>
            <person name="Kolonay J.F."/>
            <person name="McClarty G."/>
            <person name="Salzberg S.L."/>
            <person name="Eisen J.A."/>
            <person name="Fraser C.M."/>
        </authorList>
    </citation>
    <scope>NUCLEOTIDE SEQUENCE [LARGE SCALE GENOMIC DNA]</scope>
    <source>
        <strain>MoPn / Nigg</strain>
    </source>
</reference>
<gene>
    <name type="primary">metG</name>
    <name type="ordered locus">TC_0301</name>
</gene>
<keyword id="KW-0030">Aminoacyl-tRNA synthetase</keyword>
<keyword id="KW-0067">ATP-binding</keyword>
<keyword id="KW-0963">Cytoplasm</keyword>
<keyword id="KW-0436">Ligase</keyword>
<keyword id="KW-0479">Metal-binding</keyword>
<keyword id="KW-0547">Nucleotide-binding</keyword>
<keyword id="KW-0648">Protein biosynthesis</keyword>
<keyword id="KW-0862">Zinc</keyword>
<sequence length="550" mass="62815">MASSRILITSALPYANGPLHFGHITGAYLPADVYARFQRLLGKEVLYICGSDEYGIAITLNAELAGMGYQEYVDMYHKLHKDTLKKLGISVDFFSRTTNPHHPAIVQDFYRNLQDKGLMENLVTDQLYSEEEEKFLADRYVVGTCPKCGFDRARGDECQQCGADYEARDLKDPRSKLTGKALSLRETEHAYFHLERMKEELLTFVEGIYLRPHMRNFVIDYIKNLRPRAVTRDLSWGVPVPGLENKVFYVWFDAPIGYISGTMDWAASIGDPDAWKKFWLDDKVTYTQFVGKDNTSFHSVIFPAMEMGQSLPYKKVDALVTSEFLLLEGFQFSKSEGNIIDMDAFLETYSLDKLRYVLAAIAPETSDSEFAFQEFKTRCNSDLVGKFGNFVNRVVAFAAKNGCTELSHPQLEQQDLEFIAEAQKLAKEAADHYQQYSLRKACSTIMELAALGNGYFNDQAPWKLAKEDLWNRVRSILFCACYCQKLLALISYPIMPETAWTIWGMIAPGSLDLRSQDPERLQSIWTEAFFDYSEESFSLKEPELLFTVVE</sequence>
<name>SYM_CHLMU</name>
<accession>Q9PL07</accession>
<protein>
    <recommendedName>
        <fullName>Methionine--tRNA ligase</fullName>
        <ecNumber>6.1.1.10</ecNumber>
    </recommendedName>
    <alternativeName>
        <fullName>Methionyl-tRNA synthetase</fullName>
        <shortName>MetRS</shortName>
    </alternativeName>
</protein>